<dbReference type="EC" id="2.3.1.274"/>
<dbReference type="EMBL" id="BX548175">
    <property type="protein sequence ID" value="CAE22169.1"/>
    <property type="molecule type" value="Genomic_DNA"/>
</dbReference>
<dbReference type="RefSeq" id="WP_011131360.1">
    <property type="nucleotide sequence ID" value="NC_005071.1"/>
</dbReference>
<dbReference type="SMR" id="Q7V4F7"/>
<dbReference type="KEGG" id="pmt:PMT_1995"/>
<dbReference type="eggNOG" id="COG0416">
    <property type="taxonomic scope" value="Bacteria"/>
</dbReference>
<dbReference type="HOGENOM" id="CLU_039379_0_0_3"/>
<dbReference type="OrthoDB" id="9806408at2"/>
<dbReference type="UniPathway" id="UPA00085"/>
<dbReference type="Proteomes" id="UP000001423">
    <property type="component" value="Chromosome"/>
</dbReference>
<dbReference type="GO" id="GO:0005737">
    <property type="term" value="C:cytoplasm"/>
    <property type="evidence" value="ECO:0007669"/>
    <property type="project" value="UniProtKB-SubCell"/>
</dbReference>
<dbReference type="GO" id="GO:0043811">
    <property type="term" value="F:phosphate:acyl-[acyl carrier protein] acyltransferase activity"/>
    <property type="evidence" value="ECO:0007669"/>
    <property type="project" value="UniProtKB-UniRule"/>
</dbReference>
<dbReference type="GO" id="GO:0006633">
    <property type="term" value="P:fatty acid biosynthetic process"/>
    <property type="evidence" value="ECO:0007669"/>
    <property type="project" value="UniProtKB-UniRule"/>
</dbReference>
<dbReference type="GO" id="GO:0008654">
    <property type="term" value="P:phospholipid biosynthetic process"/>
    <property type="evidence" value="ECO:0007669"/>
    <property type="project" value="UniProtKB-KW"/>
</dbReference>
<dbReference type="Gene3D" id="3.40.718.10">
    <property type="entry name" value="Isopropylmalate Dehydrogenase"/>
    <property type="match status" value="1"/>
</dbReference>
<dbReference type="HAMAP" id="MF_00019">
    <property type="entry name" value="PlsX"/>
    <property type="match status" value="1"/>
</dbReference>
<dbReference type="InterPro" id="IPR003664">
    <property type="entry name" value="FA_synthesis"/>
</dbReference>
<dbReference type="InterPro" id="IPR012281">
    <property type="entry name" value="Phospholipid_synth_PlsX-like"/>
</dbReference>
<dbReference type="NCBIfam" id="TIGR00182">
    <property type="entry name" value="plsX"/>
    <property type="match status" value="1"/>
</dbReference>
<dbReference type="NCBIfam" id="NF010419">
    <property type="entry name" value="PRK13845.1"/>
    <property type="match status" value="1"/>
</dbReference>
<dbReference type="PANTHER" id="PTHR30100">
    <property type="entry name" value="FATTY ACID/PHOSPHOLIPID SYNTHESIS PROTEIN PLSX"/>
    <property type="match status" value="1"/>
</dbReference>
<dbReference type="PANTHER" id="PTHR30100:SF1">
    <property type="entry name" value="PHOSPHATE ACYLTRANSFERASE"/>
    <property type="match status" value="1"/>
</dbReference>
<dbReference type="Pfam" id="PF02504">
    <property type="entry name" value="FA_synthesis"/>
    <property type="match status" value="1"/>
</dbReference>
<dbReference type="SUPFAM" id="SSF53659">
    <property type="entry name" value="Isocitrate/Isopropylmalate dehydrogenase-like"/>
    <property type="match status" value="1"/>
</dbReference>
<accession>Q7V4F7</accession>
<comment type="function">
    <text evidence="1">Catalyzes the reversible formation of acyl-phosphate (acyl-PO(4)) from acyl-[acyl-carrier-protein] (acyl-ACP). This enzyme utilizes acyl-ACP as fatty acyl donor, but not acyl-CoA (By similarity).</text>
</comment>
<comment type="catalytic activity">
    <reaction>
        <text>a fatty acyl-[ACP] + phosphate = an acyl phosphate + holo-[ACP]</text>
        <dbReference type="Rhea" id="RHEA:42292"/>
        <dbReference type="Rhea" id="RHEA-COMP:9685"/>
        <dbReference type="Rhea" id="RHEA-COMP:14125"/>
        <dbReference type="ChEBI" id="CHEBI:43474"/>
        <dbReference type="ChEBI" id="CHEBI:59918"/>
        <dbReference type="ChEBI" id="CHEBI:64479"/>
        <dbReference type="ChEBI" id="CHEBI:138651"/>
        <dbReference type="EC" id="2.3.1.274"/>
    </reaction>
</comment>
<comment type="pathway">
    <text>Lipid metabolism; phospholipid metabolism.</text>
</comment>
<comment type="subunit">
    <text evidence="1">Homodimer. Probably interacts with PlsY (By similarity).</text>
</comment>
<comment type="subcellular location">
    <subcellularLocation>
        <location evidence="1">Cytoplasm</location>
    </subcellularLocation>
    <text evidence="1">Associated with the membrane possibly through PlsY.</text>
</comment>
<comment type="similarity">
    <text evidence="2">Belongs to the PlsX family.</text>
</comment>
<protein>
    <recommendedName>
        <fullName>Phosphate acyltransferase</fullName>
        <ecNumber>2.3.1.274</ecNumber>
    </recommendedName>
    <alternativeName>
        <fullName>Acyl-ACP phosphotransacylase</fullName>
    </alternativeName>
    <alternativeName>
        <fullName>Acyl-[acyl-carrier-protein]--phosphate acyltransferase</fullName>
    </alternativeName>
    <alternativeName>
        <fullName>Phosphate-acyl-ACP acyltransferase</fullName>
    </alternativeName>
</protein>
<keyword id="KW-0963">Cytoplasm</keyword>
<keyword id="KW-0444">Lipid biosynthesis</keyword>
<keyword id="KW-0443">Lipid metabolism</keyword>
<keyword id="KW-0594">Phospholipid biosynthesis</keyword>
<keyword id="KW-1208">Phospholipid metabolism</keyword>
<keyword id="KW-1185">Reference proteome</keyword>
<keyword id="KW-0808">Transferase</keyword>
<organism>
    <name type="scientific">Prochlorococcus marinus (strain MIT 9313)</name>
    <dbReference type="NCBI Taxonomy" id="74547"/>
    <lineage>
        <taxon>Bacteria</taxon>
        <taxon>Bacillati</taxon>
        <taxon>Cyanobacteriota</taxon>
        <taxon>Cyanophyceae</taxon>
        <taxon>Synechococcales</taxon>
        <taxon>Prochlorococcaceae</taxon>
        <taxon>Prochlorococcus</taxon>
    </lineage>
</organism>
<name>PLSX_PROMM</name>
<reference key="1">
    <citation type="journal article" date="2003" name="Nature">
        <title>Genome divergence in two Prochlorococcus ecotypes reflects oceanic niche differentiation.</title>
        <authorList>
            <person name="Rocap G."/>
            <person name="Larimer F.W."/>
            <person name="Lamerdin J.E."/>
            <person name="Malfatti S."/>
            <person name="Chain P."/>
            <person name="Ahlgren N.A."/>
            <person name="Arellano A."/>
            <person name="Coleman M."/>
            <person name="Hauser L."/>
            <person name="Hess W.R."/>
            <person name="Johnson Z.I."/>
            <person name="Land M.L."/>
            <person name="Lindell D."/>
            <person name="Post A.F."/>
            <person name="Regala W."/>
            <person name="Shah M."/>
            <person name="Shaw S.L."/>
            <person name="Steglich C."/>
            <person name="Sullivan M.B."/>
            <person name="Ting C.S."/>
            <person name="Tolonen A."/>
            <person name="Webb E.A."/>
            <person name="Zinser E.R."/>
            <person name="Chisholm S.W."/>
        </authorList>
    </citation>
    <scope>NUCLEOTIDE SEQUENCE [LARGE SCALE GENOMIC DNA]</scope>
    <source>
        <strain>MIT 9313</strain>
    </source>
</reference>
<feature type="chain" id="PRO_0000189920" description="Phosphate acyltransferase">
    <location>
        <begin position="1"/>
        <end position="448"/>
    </location>
</feature>
<feature type="region of interest" description="Unknown">
    <location>
        <begin position="1"/>
        <end position="105"/>
    </location>
</feature>
<feature type="region of interest" description="Phosphate acyltransferase">
    <location>
        <begin position="106"/>
        <end position="448"/>
    </location>
</feature>
<sequence>MPPKDSDSSTASGPRSKTTRPRAIRRLVIWYRRNAAVTSLVGSATNSASAAGNVAGTVVSSAGSVVSNAGSMAGSMLQPLVFDPLRRLQSSENNPEAEDIKNSDRLWVAVDGMGGDEAPGPILDGCLKAIQRLPLRIKFVGETEKVLGAVQAMGLTELFNQATAAGHLELVASGPSVGMDEEATVVRRKRDASINLTMDLVKKGEALAMYSAGNSGAMMASAIFRLGRLAGIDRPAIGALFPTKDPTQPVLVLDVGANMDCKPIYLHQFALLGNIYSRDVLQVARPRIGLLNIGEEECKGNDLAIRTHELLSEEHRLQFAGNCEGRDVLSGAFDVVVCDGFTGNVLLKFLESVGSVLLDVLRAELPRGRRGKVGSAFLRSNLKRIKKRLDHAEHGGALLLGVNGICVIGHGSSKALSVVSALRLAHSAASHGVMDDLAELQKAPVESA</sequence>
<evidence type="ECO:0000250" key="1"/>
<evidence type="ECO:0000305" key="2"/>
<proteinExistence type="inferred from homology"/>
<gene>
    <name type="primary">plsX</name>
    <name type="ordered locus">PMT_1995</name>
</gene>